<sequence>MAVDIQYSYSSMAPSLRRERFTFKISPKLSKPLRPCIQLGSKDEASGMVAPAVQEKKVKKRVSFADNQGLALTMVKVFSEFDDPLDIPFNITELLDNIVSLTTAESESFVLDFPQPSADYLDFRNRLQTNHVCLENCVLKDKAIAGTVKVQNLAFEKVVKIRMTFDTWKSFTDFPCQYVKDTYAGSDRDTFSFDISLPEKIQSYERMEFAVCYECNGQAYWDSNKGKNYRITRAELRSSPGKIEPYNGPDFGISFDQFGSPRCSFGLFPEWPSYLGYEKLGPYY</sequence>
<comment type="function">
    <text evidence="1">Acts as a glycogen-targeting subunit for phosphatase PP1. Facilitates interaction of the PP1 with enzymes of the glycogen metabolism and regulates its activity. Suppresses the rate at which PP1 dephosphorylates (inactivates) glycogen phosphorylase and enhances the rate at which it activates glycogen synthase and therefore limits glycogen breakdown. Its activity is inhibited by PYGL, resulting in inhibition of the glycogen synthase and glycogen phosphorylase phosphatase activities of PP1. Dramatically increases basal and insulin-stimulated glycogen synthesis upon overexpression in hepatocytes (By similarity).</text>
</comment>
<comment type="subunit">
    <text evidence="1">Interacts with glycogen, PPP1CC catalytic subunit of PP1 and PYGL. Associates with glycogen particles. Forms complexes with debranching enzyme, glycogen phosphorylase, glycogen synthase and phosphorylase kinase which is necessary for its regulation of PP1 activity (By similarity).</text>
</comment>
<comment type="tissue specificity">
    <text evidence="3 4">Highly expressed in liver (at protein level). Expressed predominantly in liver. Expressed moderately in heart. Expressed weakly in prostate, stomach, thyroid, lung, kidney, spleen and skeletal muscle.</text>
</comment>
<comment type="developmental stage">
    <text evidence="4">Expressed in lung at 12.5 and 16.5 dpc and declines thereafter. Expressed in epithelial cells of the bronchus and smooth muscle of the pulmonary artery at 13.5 and 16.5 dpc.</text>
</comment>
<comment type="induction">
    <text evidence="4">Up-regulated by TITF1.</text>
</comment>
<comment type="domain">
    <text evidence="1">The N-terminal region is required for binding to PP1, the central region is required for binding to glycogen and the C-terminal region is required for binding to PYGL.</text>
</comment>
<comment type="sequence caution" evidence="5">
    <conflict type="erroneous initiation">
        <sequence resource="EMBL-CDS" id="AAH60261"/>
    </conflict>
</comment>
<accession>Q8C767</accession>
<accession>Q6PAJ7</accession>
<gene>
    <name type="primary">Ppp1r3b</name>
    <name type="synonym">Ppp1r4</name>
</gene>
<dbReference type="EMBL" id="AK052438">
    <property type="protein sequence ID" value="BAC34990.1"/>
    <property type="molecule type" value="mRNA"/>
</dbReference>
<dbReference type="EMBL" id="BC060261">
    <property type="protein sequence ID" value="AAH60261.1"/>
    <property type="status" value="ALT_INIT"/>
    <property type="molecule type" value="mRNA"/>
</dbReference>
<dbReference type="EMBL" id="BC079666">
    <property type="protein sequence ID" value="AAH79666.1"/>
    <property type="molecule type" value="mRNA"/>
</dbReference>
<dbReference type="CCDS" id="CCDS22243.1"/>
<dbReference type="RefSeq" id="NP_001351379.1">
    <property type="nucleotide sequence ID" value="NM_001364450.1"/>
</dbReference>
<dbReference type="RefSeq" id="NP_001351380.1">
    <property type="nucleotide sequence ID" value="NM_001364451.1"/>
</dbReference>
<dbReference type="RefSeq" id="NP_001351381.1">
    <property type="nucleotide sequence ID" value="NM_001364452.1"/>
</dbReference>
<dbReference type="RefSeq" id="NP_808409.1">
    <property type="nucleotide sequence ID" value="NM_177741.4"/>
</dbReference>
<dbReference type="RefSeq" id="XP_006509181.1">
    <property type="nucleotide sequence ID" value="XM_006509118.3"/>
</dbReference>
<dbReference type="RefSeq" id="XP_017168286.1">
    <property type="nucleotide sequence ID" value="XM_017312797.3"/>
</dbReference>
<dbReference type="RefSeq" id="XP_017168287.1">
    <property type="nucleotide sequence ID" value="XM_017312798.1"/>
</dbReference>
<dbReference type="SMR" id="Q8C767"/>
<dbReference type="BioGRID" id="232645">
    <property type="interactions" value="9"/>
</dbReference>
<dbReference type="FunCoup" id="Q8C767">
    <property type="interactions" value="816"/>
</dbReference>
<dbReference type="IntAct" id="Q8C767">
    <property type="interactions" value="9"/>
</dbReference>
<dbReference type="STRING" id="10090.ENSMUSP00000147633"/>
<dbReference type="CAZy" id="CBM21">
    <property type="family name" value="Carbohydrate-Binding Module Family 21"/>
</dbReference>
<dbReference type="iPTMnet" id="Q8C767"/>
<dbReference type="PhosphoSitePlus" id="Q8C767"/>
<dbReference type="PaxDb" id="10090-ENSMUSP00000065679"/>
<dbReference type="ProteomicsDB" id="291840"/>
<dbReference type="Antibodypedia" id="22075">
    <property type="antibodies" value="128 antibodies from 22 providers"/>
</dbReference>
<dbReference type="DNASU" id="244416"/>
<dbReference type="Ensembl" id="ENSMUST00000070481.8">
    <property type="protein sequence ID" value="ENSMUSP00000065679.7"/>
    <property type="gene ID" value="ENSMUSG00000046794.10"/>
</dbReference>
<dbReference type="Ensembl" id="ENSMUST00000210337.2">
    <property type="protein sequence ID" value="ENSMUSP00000147736.2"/>
    <property type="gene ID" value="ENSMUSG00000046794.10"/>
</dbReference>
<dbReference type="Ensembl" id="ENSMUST00000211648.2">
    <property type="protein sequence ID" value="ENSMUSP00000147633.2"/>
    <property type="gene ID" value="ENSMUSG00000046794.10"/>
</dbReference>
<dbReference type="GeneID" id="244416"/>
<dbReference type="KEGG" id="mmu:244416"/>
<dbReference type="UCSC" id="uc009lkw.1">
    <property type="organism name" value="mouse"/>
</dbReference>
<dbReference type="AGR" id="MGI:2177268"/>
<dbReference type="CTD" id="79660"/>
<dbReference type="MGI" id="MGI:2177268">
    <property type="gene designation" value="Ppp1r3b"/>
</dbReference>
<dbReference type="VEuPathDB" id="HostDB:ENSMUSG00000046794"/>
<dbReference type="eggNOG" id="KOG3986">
    <property type="taxonomic scope" value="Eukaryota"/>
</dbReference>
<dbReference type="GeneTree" id="ENSGT00940000159475"/>
<dbReference type="HOGENOM" id="CLU_040215_2_1_1"/>
<dbReference type="InParanoid" id="Q8C767"/>
<dbReference type="OMA" id="YRIIQAE"/>
<dbReference type="OrthoDB" id="8942186at2759"/>
<dbReference type="PhylomeDB" id="Q8C767"/>
<dbReference type="TreeFam" id="TF105537"/>
<dbReference type="BioGRID-ORCS" id="244416">
    <property type="hits" value="1 hit in 78 CRISPR screens"/>
</dbReference>
<dbReference type="ChiTaRS" id="Ppp1r3b">
    <property type="organism name" value="mouse"/>
</dbReference>
<dbReference type="PRO" id="PR:Q8C767"/>
<dbReference type="Proteomes" id="UP000000589">
    <property type="component" value="Chromosome 8"/>
</dbReference>
<dbReference type="RNAct" id="Q8C767">
    <property type="molecule type" value="protein"/>
</dbReference>
<dbReference type="Bgee" id="ENSMUSG00000046794">
    <property type="expression patterns" value="Expressed in left lung lobe and 180 other cell types or tissues"/>
</dbReference>
<dbReference type="GO" id="GO:0042587">
    <property type="term" value="C:glycogen granule"/>
    <property type="evidence" value="ECO:0007669"/>
    <property type="project" value="Ensembl"/>
</dbReference>
<dbReference type="GO" id="GO:0000164">
    <property type="term" value="C:protein phosphatase type 1 complex"/>
    <property type="evidence" value="ECO:0007669"/>
    <property type="project" value="Ensembl"/>
</dbReference>
<dbReference type="GO" id="GO:0050196">
    <property type="term" value="F:[phosphorylase] phosphatase activity"/>
    <property type="evidence" value="ECO:0007669"/>
    <property type="project" value="Ensembl"/>
</dbReference>
<dbReference type="GO" id="GO:0019899">
    <property type="term" value="F:enzyme binding"/>
    <property type="evidence" value="ECO:0007669"/>
    <property type="project" value="Ensembl"/>
</dbReference>
<dbReference type="GO" id="GO:0019888">
    <property type="term" value="F:protein phosphatase regulator activity"/>
    <property type="evidence" value="ECO:0007669"/>
    <property type="project" value="Ensembl"/>
</dbReference>
<dbReference type="GO" id="GO:0005977">
    <property type="term" value="P:glycogen metabolic process"/>
    <property type="evidence" value="ECO:0007669"/>
    <property type="project" value="UniProtKB-KW"/>
</dbReference>
<dbReference type="GO" id="GO:0045818">
    <property type="term" value="P:negative regulation of glycogen catabolic process"/>
    <property type="evidence" value="ECO:0000266"/>
    <property type="project" value="MGI"/>
</dbReference>
<dbReference type="GO" id="GO:0045725">
    <property type="term" value="P:positive regulation of glycogen biosynthetic process"/>
    <property type="evidence" value="ECO:0000315"/>
    <property type="project" value="FlyBase"/>
</dbReference>
<dbReference type="CDD" id="cd22814">
    <property type="entry name" value="PBD_PPP1R3B"/>
    <property type="match status" value="1"/>
</dbReference>
<dbReference type="FunFam" id="2.60.40.2440:FF:000001">
    <property type="entry name" value="Protein phosphatase 1 regulatory subunit 3C"/>
    <property type="match status" value="1"/>
</dbReference>
<dbReference type="Gene3D" id="2.60.40.2440">
    <property type="entry name" value="Carbohydrate binding type-21 domain"/>
    <property type="match status" value="1"/>
</dbReference>
<dbReference type="InterPro" id="IPR005036">
    <property type="entry name" value="CBM21_dom"/>
</dbReference>
<dbReference type="InterPro" id="IPR038175">
    <property type="entry name" value="CBM21_dom_sf"/>
</dbReference>
<dbReference type="InterPro" id="IPR017434">
    <property type="entry name" value="Pase-1_reg-su_3B/C/D_met"/>
</dbReference>
<dbReference type="InterPro" id="IPR030682">
    <property type="entry name" value="PP1_3B"/>
</dbReference>
<dbReference type="InterPro" id="IPR050782">
    <property type="entry name" value="PP1_regulatory_subunit_3"/>
</dbReference>
<dbReference type="PANTHER" id="PTHR12307">
    <property type="entry name" value="PROTEIN PHOSPHATASE 1 REGULATORY SUBUNIT"/>
    <property type="match status" value="1"/>
</dbReference>
<dbReference type="PANTHER" id="PTHR12307:SF13">
    <property type="entry name" value="PROTEIN PHOSPHATASE 1 REGULATORY SUBUNIT 3B"/>
    <property type="match status" value="1"/>
</dbReference>
<dbReference type="Pfam" id="PF03370">
    <property type="entry name" value="CBM_21"/>
    <property type="match status" value="1"/>
</dbReference>
<dbReference type="PIRSF" id="PIRSF500814">
    <property type="entry name" value="PP1_GL"/>
    <property type="match status" value="1"/>
</dbReference>
<dbReference type="PIRSF" id="PIRSF038207">
    <property type="entry name" value="PP1_GT_animal"/>
    <property type="match status" value="1"/>
</dbReference>
<dbReference type="PROSITE" id="PS51159">
    <property type="entry name" value="CBM21"/>
    <property type="match status" value="1"/>
</dbReference>
<protein>
    <recommendedName>
        <fullName>Protein phosphatase 1 regulatory subunit 3B</fullName>
    </recommendedName>
    <alternativeName>
        <fullName>Hepatic glycogen-targeting protein phosphatase 1 regulatory subunit GL</fullName>
    </alternativeName>
    <alternativeName>
        <fullName>Protein phosphatase 1 regulatory subunit 4</fullName>
        <shortName>PP1 subunit R4</shortName>
    </alternativeName>
    <alternativeName>
        <fullName>Protein phosphatase 1 subunit GL</fullName>
        <shortName>PTG</shortName>
    </alternativeName>
</protein>
<feature type="chain" id="PRO_0000324544" description="Protein phosphatase 1 regulatory subunit 3B">
    <location>
        <begin position="1"/>
        <end position="284"/>
    </location>
</feature>
<feature type="domain" description="CBM21" evidence="2">
    <location>
        <begin position="124"/>
        <end position="232"/>
    </location>
</feature>
<feature type="short sequence motif" description="PP1-binding motif">
    <location>
        <begin position="61"/>
        <end position="64"/>
    </location>
</feature>
<feature type="modified residue" description="Phosphoserine" evidence="6">
    <location>
        <position position="260"/>
    </location>
</feature>
<organism>
    <name type="scientific">Mus musculus</name>
    <name type="common">Mouse</name>
    <dbReference type="NCBI Taxonomy" id="10090"/>
    <lineage>
        <taxon>Eukaryota</taxon>
        <taxon>Metazoa</taxon>
        <taxon>Chordata</taxon>
        <taxon>Craniata</taxon>
        <taxon>Vertebrata</taxon>
        <taxon>Euteleostomi</taxon>
        <taxon>Mammalia</taxon>
        <taxon>Eutheria</taxon>
        <taxon>Euarchontoglires</taxon>
        <taxon>Glires</taxon>
        <taxon>Rodentia</taxon>
        <taxon>Myomorpha</taxon>
        <taxon>Muroidea</taxon>
        <taxon>Muridae</taxon>
        <taxon>Murinae</taxon>
        <taxon>Mus</taxon>
        <taxon>Mus</taxon>
    </lineage>
</organism>
<keyword id="KW-0119">Carbohydrate metabolism</keyword>
<keyword id="KW-0321">Glycogen metabolism</keyword>
<keyword id="KW-0597">Phosphoprotein</keyword>
<keyword id="KW-1185">Reference proteome</keyword>
<evidence type="ECO:0000250" key="1"/>
<evidence type="ECO:0000255" key="2">
    <source>
        <dbReference type="PROSITE-ProRule" id="PRU00491"/>
    </source>
</evidence>
<evidence type="ECO:0000269" key="3">
    <source>
    </source>
</evidence>
<evidence type="ECO:0000269" key="4">
    <source>
    </source>
</evidence>
<evidence type="ECO:0000305" key="5"/>
<evidence type="ECO:0007744" key="6">
    <source>
    </source>
</evidence>
<name>PPR3B_MOUSE</name>
<reference key="1">
    <citation type="journal article" date="2005" name="Science">
        <title>The transcriptional landscape of the mammalian genome.</title>
        <authorList>
            <person name="Carninci P."/>
            <person name="Kasukawa T."/>
            <person name="Katayama S."/>
            <person name="Gough J."/>
            <person name="Frith M.C."/>
            <person name="Maeda N."/>
            <person name="Oyama R."/>
            <person name="Ravasi T."/>
            <person name="Lenhard B."/>
            <person name="Wells C."/>
            <person name="Kodzius R."/>
            <person name="Shimokawa K."/>
            <person name="Bajic V.B."/>
            <person name="Brenner S.E."/>
            <person name="Batalov S."/>
            <person name="Forrest A.R."/>
            <person name="Zavolan M."/>
            <person name="Davis M.J."/>
            <person name="Wilming L.G."/>
            <person name="Aidinis V."/>
            <person name="Allen J.E."/>
            <person name="Ambesi-Impiombato A."/>
            <person name="Apweiler R."/>
            <person name="Aturaliya R.N."/>
            <person name="Bailey T.L."/>
            <person name="Bansal M."/>
            <person name="Baxter L."/>
            <person name="Beisel K.W."/>
            <person name="Bersano T."/>
            <person name="Bono H."/>
            <person name="Chalk A.M."/>
            <person name="Chiu K.P."/>
            <person name="Choudhary V."/>
            <person name="Christoffels A."/>
            <person name="Clutterbuck D.R."/>
            <person name="Crowe M.L."/>
            <person name="Dalla E."/>
            <person name="Dalrymple B.P."/>
            <person name="de Bono B."/>
            <person name="Della Gatta G."/>
            <person name="di Bernardo D."/>
            <person name="Down T."/>
            <person name="Engstrom P."/>
            <person name="Fagiolini M."/>
            <person name="Faulkner G."/>
            <person name="Fletcher C.F."/>
            <person name="Fukushima T."/>
            <person name="Furuno M."/>
            <person name="Futaki S."/>
            <person name="Gariboldi M."/>
            <person name="Georgii-Hemming P."/>
            <person name="Gingeras T.R."/>
            <person name="Gojobori T."/>
            <person name="Green R.E."/>
            <person name="Gustincich S."/>
            <person name="Harbers M."/>
            <person name="Hayashi Y."/>
            <person name="Hensch T.K."/>
            <person name="Hirokawa N."/>
            <person name="Hill D."/>
            <person name="Huminiecki L."/>
            <person name="Iacono M."/>
            <person name="Ikeo K."/>
            <person name="Iwama A."/>
            <person name="Ishikawa T."/>
            <person name="Jakt M."/>
            <person name="Kanapin A."/>
            <person name="Katoh M."/>
            <person name="Kawasawa Y."/>
            <person name="Kelso J."/>
            <person name="Kitamura H."/>
            <person name="Kitano H."/>
            <person name="Kollias G."/>
            <person name="Krishnan S.P."/>
            <person name="Kruger A."/>
            <person name="Kummerfeld S.K."/>
            <person name="Kurochkin I.V."/>
            <person name="Lareau L.F."/>
            <person name="Lazarevic D."/>
            <person name="Lipovich L."/>
            <person name="Liu J."/>
            <person name="Liuni S."/>
            <person name="McWilliam S."/>
            <person name="Madan Babu M."/>
            <person name="Madera M."/>
            <person name="Marchionni L."/>
            <person name="Matsuda H."/>
            <person name="Matsuzawa S."/>
            <person name="Miki H."/>
            <person name="Mignone F."/>
            <person name="Miyake S."/>
            <person name="Morris K."/>
            <person name="Mottagui-Tabar S."/>
            <person name="Mulder N."/>
            <person name="Nakano N."/>
            <person name="Nakauchi H."/>
            <person name="Ng P."/>
            <person name="Nilsson R."/>
            <person name="Nishiguchi S."/>
            <person name="Nishikawa S."/>
            <person name="Nori F."/>
            <person name="Ohara O."/>
            <person name="Okazaki Y."/>
            <person name="Orlando V."/>
            <person name="Pang K.C."/>
            <person name="Pavan W.J."/>
            <person name="Pavesi G."/>
            <person name="Pesole G."/>
            <person name="Petrovsky N."/>
            <person name="Piazza S."/>
            <person name="Reed J."/>
            <person name="Reid J.F."/>
            <person name="Ring B.Z."/>
            <person name="Ringwald M."/>
            <person name="Rost B."/>
            <person name="Ruan Y."/>
            <person name="Salzberg S.L."/>
            <person name="Sandelin A."/>
            <person name="Schneider C."/>
            <person name="Schoenbach C."/>
            <person name="Sekiguchi K."/>
            <person name="Semple C.A."/>
            <person name="Seno S."/>
            <person name="Sessa L."/>
            <person name="Sheng Y."/>
            <person name="Shibata Y."/>
            <person name="Shimada H."/>
            <person name="Shimada K."/>
            <person name="Silva D."/>
            <person name="Sinclair B."/>
            <person name="Sperling S."/>
            <person name="Stupka E."/>
            <person name="Sugiura K."/>
            <person name="Sultana R."/>
            <person name="Takenaka Y."/>
            <person name="Taki K."/>
            <person name="Tammoja K."/>
            <person name="Tan S.L."/>
            <person name="Tang S."/>
            <person name="Taylor M.S."/>
            <person name="Tegner J."/>
            <person name="Teichmann S.A."/>
            <person name="Ueda H.R."/>
            <person name="van Nimwegen E."/>
            <person name="Verardo R."/>
            <person name="Wei C.L."/>
            <person name="Yagi K."/>
            <person name="Yamanishi H."/>
            <person name="Zabarovsky E."/>
            <person name="Zhu S."/>
            <person name="Zimmer A."/>
            <person name="Hide W."/>
            <person name="Bult C."/>
            <person name="Grimmond S.M."/>
            <person name="Teasdale R.D."/>
            <person name="Liu E.T."/>
            <person name="Brusic V."/>
            <person name="Quackenbush J."/>
            <person name="Wahlestedt C."/>
            <person name="Mattick J.S."/>
            <person name="Hume D.A."/>
            <person name="Kai C."/>
            <person name="Sasaki D."/>
            <person name="Tomaru Y."/>
            <person name="Fukuda S."/>
            <person name="Kanamori-Katayama M."/>
            <person name="Suzuki M."/>
            <person name="Aoki J."/>
            <person name="Arakawa T."/>
            <person name="Iida J."/>
            <person name="Imamura K."/>
            <person name="Itoh M."/>
            <person name="Kato T."/>
            <person name="Kawaji H."/>
            <person name="Kawagashira N."/>
            <person name="Kawashima T."/>
            <person name="Kojima M."/>
            <person name="Kondo S."/>
            <person name="Konno H."/>
            <person name="Nakano K."/>
            <person name="Ninomiya N."/>
            <person name="Nishio T."/>
            <person name="Okada M."/>
            <person name="Plessy C."/>
            <person name="Shibata K."/>
            <person name="Shiraki T."/>
            <person name="Suzuki S."/>
            <person name="Tagami M."/>
            <person name="Waki K."/>
            <person name="Watahiki A."/>
            <person name="Okamura-Oho Y."/>
            <person name="Suzuki H."/>
            <person name="Kawai J."/>
            <person name="Hayashizaki Y."/>
        </authorList>
    </citation>
    <scope>NUCLEOTIDE SEQUENCE [LARGE SCALE MRNA]</scope>
    <source>
        <strain>C57BL/6J</strain>
        <tissue>Lung</tissue>
    </source>
</reference>
<reference key="2">
    <citation type="journal article" date="2004" name="Genome Res.">
        <title>The status, quality, and expansion of the NIH full-length cDNA project: the Mammalian Gene Collection (MGC).</title>
        <authorList>
            <consortium name="The MGC Project Team"/>
        </authorList>
    </citation>
    <scope>NUCLEOTIDE SEQUENCE [LARGE SCALE MRNA]</scope>
    <source>
        <strain>C57BL/6J</strain>
        <tissue>Brain</tissue>
    </source>
</reference>
<reference key="3">
    <citation type="journal article" date="2002" name="Diabetes">
        <title>Human skeletal muscle expresses a glycogen-targeting subunit of PP1 that is identical to the insulin-sensitive glycogen-targeting subunit G(L) of liver.</title>
        <authorList>
            <person name="Munro S."/>
            <person name="Cuthbertson D.J."/>
            <person name="Cunningham J."/>
            <person name="Sales M."/>
            <person name="Cohen P.T.W."/>
        </authorList>
    </citation>
    <scope>TISSUE SPECIFICITY</scope>
</reference>
<reference key="4">
    <citation type="journal article" date="2006" name="Biochem. Biophys. Res. Commun.">
        <title>Identification and expression of alternative splice variants of the mouse Ppp1r3b gene in lung epithelial cells.</title>
        <authorList>
            <person name="Niimi T."/>
            <person name="Kurotani R."/>
            <person name="Kimura S."/>
            <person name="Kitagawa Y."/>
        </authorList>
    </citation>
    <scope>INDUCTION</scope>
    <scope>TISSUE SPECIFICITY</scope>
    <scope>DEVELOPMENTAL STAGE</scope>
</reference>
<reference key="5">
    <citation type="journal article" date="2010" name="Cell">
        <title>A tissue-specific atlas of mouse protein phosphorylation and expression.</title>
        <authorList>
            <person name="Huttlin E.L."/>
            <person name="Jedrychowski M.P."/>
            <person name="Elias J.E."/>
            <person name="Goswami T."/>
            <person name="Rad R."/>
            <person name="Beausoleil S.A."/>
            <person name="Villen J."/>
            <person name="Haas W."/>
            <person name="Sowa M.E."/>
            <person name="Gygi S.P."/>
        </authorList>
    </citation>
    <scope>PHOSPHORYLATION [LARGE SCALE ANALYSIS] AT SER-260</scope>
    <scope>IDENTIFICATION BY MASS SPECTROMETRY [LARGE SCALE ANALYSIS]</scope>
    <source>
        <tissue>Brown adipose tissue</tissue>
    </source>
</reference>
<proteinExistence type="evidence at protein level"/>